<name>DBP3_ASPNC</name>
<reference key="1">
    <citation type="journal article" date="2007" name="Nat. Biotechnol.">
        <title>Genome sequencing and analysis of the versatile cell factory Aspergillus niger CBS 513.88.</title>
        <authorList>
            <person name="Pel H.J."/>
            <person name="de Winde J.H."/>
            <person name="Archer D.B."/>
            <person name="Dyer P.S."/>
            <person name="Hofmann G."/>
            <person name="Schaap P.J."/>
            <person name="Turner G."/>
            <person name="de Vries R.P."/>
            <person name="Albang R."/>
            <person name="Albermann K."/>
            <person name="Andersen M.R."/>
            <person name="Bendtsen J.D."/>
            <person name="Benen J.A.E."/>
            <person name="van den Berg M."/>
            <person name="Breestraat S."/>
            <person name="Caddick M.X."/>
            <person name="Contreras R."/>
            <person name="Cornell M."/>
            <person name="Coutinho P.M."/>
            <person name="Danchin E.G.J."/>
            <person name="Debets A.J.M."/>
            <person name="Dekker P."/>
            <person name="van Dijck P.W.M."/>
            <person name="van Dijk A."/>
            <person name="Dijkhuizen L."/>
            <person name="Driessen A.J.M."/>
            <person name="d'Enfert C."/>
            <person name="Geysens S."/>
            <person name="Goosen C."/>
            <person name="Groot G.S.P."/>
            <person name="de Groot P.W.J."/>
            <person name="Guillemette T."/>
            <person name="Henrissat B."/>
            <person name="Herweijer M."/>
            <person name="van den Hombergh J.P.T.W."/>
            <person name="van den Hondel C.A.M.J.J."/>
            <person name="van der Heijden R.T.J.M."/>
            <person name="van der Kaaij R.M."/>
            <person name="Klis F.M."/>
            <person name="Kools H.J."/>
            <person name="Kubicek C.P."/>
            <person name="van Kuyk P.A."/>
            <person name="Lauber J."/>
            <person name="Lu X."/>
            <person name="van der Maarel M.J.E.C."/>
            <person name="Meulenberg R."/>
            <person name="Menke H."/>
            <person name="Mortimer M.A."/>
            <person name="Nielsen J."/>
            <person name="Oliver S.G."/>
            <person name="Olsthoorn M."/>
            <person name="Pal K."/>
            <person name="van Peij N.N.M.E."/>
            <person name="Ram A.F.J."/>
            <person name="Rinas U."/>
            <person name="Roubos J.A."/>
            <person name="Sagt C.M.J."/>
            <person name="Schmoll M."/>
            <person name="Sun J."/>
            <person name="Ussery D."/>
            <person name="Varga J."/>
            <person name="Vervecken W."/>
            <person name="van de Vondervoort P.J.J."/>
            <person name="Wedler H."/>
            <person name="Woesten H.A.B."/>
            <person name="Zeng A.-P."/>
            <person name="van Ooyen A.J.J."/>
            <person name="Visser J."/>
            <person name="Stam H."/>
        </authorList>
    </citation>
    <scope>NUCLEOTIDE SEQUENCE [LARGE SCALE GENOMIC DNA]</scope>
    <source>
        <strain>ATCC MYA-4892 / CBS 513.88 / FGSC A1513</strain>
    </source>
</reference>
<evidence type="ECO:0000250" key="1"/>
<evidence type="ECO:0000255" key="2">
    <source>
        <dbReference type="PROSITE-ProRule" id="PRU00541"/>
    </source>
</evidence>
<evidence type="ECO:0000255" key="3">
    <source>
        <dbReference type="PROSITE-ProRule" id="PRU00542"/>
    </source>
</evidence>
<evidence type="ECO:0000256" key="4">
    <source>
        <dbReference type="SAM" id="MobiDB-lite"/>
    </source>
</evidence>
<evidence type="ECO:0000305" key="5"/>
<feature type="chain" id="PRO_0000281696" description="ATP-dependent RNA helicase dbp3">
    <location>
        <begin position="1"/>
        <end position="495"/>
    </location>
</feature>
<feature type="domain" description="Helicase ATP-binding" evidence="2">
    <location>
        <begin position="109"/>
        <end position="284"/>
    </location>
</feature>
<feature type="domain" description="Helicase C-terminal" evidence="3">
    <location>
        <begin position="315"/>
        <end position="464"/>
    </location>
</feature>
<feature type="region of interest" description="Disordered" evidence="4">
    <location>
        <begin position="1"/>
        <end position="49"/>
    </location>
</feature>
<feature type="short sequence motif" description="Q motif">
    <location>
        <begin position="97"/>
        <end position="105"/>
    </location>
</feature>
<feature type="short sequence motif" description="DEAD box">
    <location>
        <begin position="231"/>
        <end position="234"/>
    </location>
</feature>
<feature type="compositionally biased region" description="Basic and acidic residues" evidence="4">
    <location>
        <begin position="1"/>
        <end position="14"/>
    </location>
</feature>
<feature type="compositionally biased region" description="Basic residues" evidence="4">
    <location>
        <begin position="15"/>
        <end position="27"/>
    </location>
</feature>
<feature type="binding site" evidence="2">
    <location>
        <begin position="122"/>
        <end position="129"/>
    </location>
    <ligand>
        <name>ATP</name>
        <dbReference type="ChEBI" id="CHEBI:30616"/>
    </ligand>
</feature>
<comment type="function">
    <text evidence="1">ATP-dependent RNA helicase required for 60S ribosomal subunit synthesis. Involved in efficient pre-rRNA processing, predominantly at site A3, which is necessary for the normal formation of 25S and 5.8S rRNAs (By similarity).</text>
</comment>
<comment type="catalytic activity">
    <reaction>
        <text>ATP + H2O = ADP + phosphate + H(+)</text>
        <dbReference type="Rhea" id="RHEA:13065"/>
        <dbReference type="ChEBI" id="CHEBI:15377"/>
        <dbReference type="ChEBI" id="CHEBI:15378"/>
        <dbReference type="ChEBI" id="CHEBI:30616"/>
        <dbReference type="ChEBI" id="CHEBI:43474"/>
        <dbReference type="ChEBI" id="CHEBI:456216"/>
        <dbReference type="EC" id="3.6.4.13"/>
    </reaction>
</comment>
<comment type="subcellular location">
    <subcellularLocation>
        <location evidence="1">Nucleus</location>
        <location evidence="1">Nucleolus</location>
    </subcellularLocation>
</comment>
<comment type="domain">
    <text>The Q motif is unique to and characteristic of the DEAD box family of RNA helicases and controls ATP binding and hydrolysis.</text>
</comment>
<comment type="similarity">
    <text evidence="5">Belongs to the DEAD box helicase family. DDX5/DBP2 subfamily.</text>
</comment>
<keyword id="KW-0067">ATP-binding</keyword>
<keyword id="KW-0347">Helicase</keyword>
<keyword id="KW-0378">Hydrolase</keyword>
<keyword id="KW-0547">Nucleotide-binding</keyword>
<keyword id="KW-0539">Nucleus</keyword>
<keyword id="KW-1185">Reference proteome</keyword>
<keyword id="KW-0690">Ribosome biogenesis</keyword>
<keyword id="KW-0694">RNA-binding</keyword>
<keyword id="KW-0698">rRNA processing</keyword>
<accession>A2QFL3</accession>
<sequence>MAKRELQDKGSTEHRAKKKSRNEKHTKKAEDSQASAQSSETQYTDPKEPSPAVIEKFLEENSVKITDTLEGATKLHPITSFSHLPTCNSALYRPLESFTSPTAIQSATWPFLFSGRDVIGIAETGSGKTLGFGLPCLKNLQDSAKKGKPYKPTAVMISPTRELAMQIHDQISKFAELVDIKVACIFGGVKKEEQREALKTAAIVVATPGRLKDLQNDGSVDLGKVKYLVLDEADRMLDKGFEQDIKDIIRPMPVSKRQTVMFTATWPPVVRDLAATFMTSPVTVTIGGEPSADPRANTRIKQVVEVVKPHEKEQRLVQLLNKYQKGPSSSDKILVFCLYKKEAVRVERLLWNKGFKVAGIHGDLGQQERFKSLESFKKGVSTVLVATDVAARGLDIPSVKLVINVTFPLTVEDYVHRIGRTGRAGAEGHAITLFTEVDKAQSGALINVLKAANQDVPEDLLKFGATVKKKQHDAYGAFYKDVDTNKTSTKIVFDD</sequence>
<gene>
    <name type="primary">dbp3</name>
    <name type="ORF">An02g14950</name>
</gene>
<dbReference type="EC" id="3.6.4.13"/>
<dbReference type="EMBL" id="AM270041">
    <property type="protein sequence ID" value="CAK37981.1"/>
    <property type="molecule type" value="Genomic_DNA"/>
</dbReference>
<dbReference type="RefSeq" id="XP_001400624.1">
    <property type="nucleotide sequence ID" value="XM_001400587.2"/>
</dbReference>
<dbReference type="SMR" id="A2QFL3"/>
<dbReference type="EnsemblFungi" id="CAK37981">
    <property type="protein sequence ID" value="CAK37981"/>
    <property type="gene ID" value="An02g14950"/>
</dbReference>
<dbReference type="GeneID" id="4980034"/>
<dbReference type="KEGG" id="ang:An02g14950"/>
<dbReference type="VEuPathDB" id="FungiDB:An02g14950"/>
<dbReference type="HOGENOM" id="CLU_003041_1_5_1"/>
<dbReference type="Proteomes" id="UP000006706">
    <property type="component" value="Chromosome 4R"/>
</dbReference>
<dbReference type="GO" id="GO:0005730">
    <property type="term" value="C:nucleolus"/>
    <property type="evidence" value="ECO:0007669"/>
    <property type="project" value="UniProtKB-SubCell"/>
</dbReference>
<dbReference type="GO" id="GO:0030687">
    <property type="term" value="C:preribosome, large subunit precursor"/>
    <property type="evidence" value="ECO:0007669"/>
    <property type="project" value="EnsemblFungi"/>
</dbReference>
<dbReference type="GO" id="GO:0005524">
    <property type="term" value="F:ATP binding"/>
    <property type="evidence" value="ECO:0007669"/>
    <property type="project" value="UniProtKB-KW"/>
</dbReference>
<dbReference type="GO" id="GO:0016887">
    <property type="term" value="F:ATP hydrolysis activity"/>
    <property type="evidence" value="ECO:0007669"/>
    <property type="project" value="RHEA"/>
</dbReference>
<dbReference type="GO" id="GO:0003723">
    <property type="term" value="F:RNA binding"/>
    <property type="evidence" value="ECO:0007669"/>
    <property type="project" value="UniProtKB-KW"/>
</dbReference>
<dbReference type="GO" id="GO:0003724">
    <property type="term" value="F:RNA helicase activity"/>
    <property type="evidence" value="ECO:0007669"/>
    <property type="project" value="UniProtKB-EC"/>
</dbReference>
<dbReference type="GO" id="GO:0000464">
    <property type="term" value="P:endonucleolytic cleavage in ITS1 upstream of 5.8S rRNA from tricistronic rRNA transcript (SSU-rRNA, 5.8S rRNA, LSU-rRNA)"/>
    <property type="evidence" value="ECO:0007669"/>
    <property type="project" value="EnsemblFungi"/>
</dbReference>
<dbReference type="CDD" id="cd00268">
    <property type="entry name" value="DEADc"/>
    <property type="match status" value="1"/>
</dbReference>
<dbReference type="CDD" id="cd18787">
    <property type="entry name" value="SF2_C_DEAD"/>
    <property type="match status" value="1"/>
</dbReference>
<dbReference type="FunFam" id="3.40.50.300:FF:000008">
    <property type="entry name" value="ATP-dependent RNA helicase RhlB"/>
    <property type="match status" value="1"/>
</dbReference>
<dbReference type="Gene3D" id="3.40.50.300">
    <property type="entry name" value="P-loop containing nucleotide triphosphate hydrolases"/>
    <property type="match status" value="2"/>
</dbReference>
<dbReference type="InterPro" id="IPR011545">
    <property type="entry name" value="DEAD/DEAH_box_helicase_dom"/>
</dbReference>
<dbReference type="InterPro" id="IPR014001">
    <property type="entry name" value="Helicase_ATP-bd"/>
</dbReference>
<dbReference type="InterPro" id="IPR001650">
    <property type="entry name" value="Helicase_C-like"/>
</dbReference>
<dbReference type="InterPro" id="IPR027417">
    <property type="entry name" value="P-loop_NTPase"/>
</dbReference>
<dbReference type="InterPro" id="IPR000629">
    <property type="entry name" value="RNA-helicase_DEAD-box_CS"/>
</dbReference>
<dbReference type="PANTHER" id="PTHR47958">
    <property type="entry name" value="ATP-DEPENDENT RNA HELICASE DBP3"/>
    <property type="match status" value="1"/>
</dbReference>
<dbReference type="Pfam" id="PF00270">
    <property type="entry name" value="DEAD"/>
    <property type="match status" value="1"/>
</dbReference>
<dbReference type="Pfam" id="PF00271">
    <property type="entry name" value="Helicase_C"/>
    <property type="match status" value="1"/>
</dbReference>
<dbReference type="SMART" id="SM00487">
    <property type="entry name" value="DEXDc"/>
    <property type="match status" value="1"/>
</dbReference>
<dbReference type="SMART" id="SM00490">
    <property type="entry name" value="HELICc"/>
    <property type="match status" value="1"/>
</dbReference>
<dbReference type="SUPFAM" id="SSF52540">
    <property type="entry name" value="P-loop containing nucleoside triphosphate hydrolases"/>
    <property type="match status" value="1"/>
</dbReference>
<dbReference type="PROSITE" id="PS00039">
    <property type="entry name" value="DEAD_ATP_HELICASE"/>
    <property type="match status" value="1"/>
</dbReference>
<dbReference type="PROSITE" id="PS51192">
    <property type="entry name" value="HELICASE_ATP_BIND_1"/>
    <property type="match status" value="1"/>
</dbReference>
<dbReference type="PROSITE" id="PS51194">
    <property type="entry name" value="HELICASE_CTER"/>
    <property type="match status" value="1"/>
</dbReference>
<protein>
    <recommendedName>
        <fullName>ATP-dependent RNA helicase dbp3</fullName>
        <ecNumber>3.6.4.13</ecNumber>
    </recommendedName>
</protein>
<proteinExistence type="inferred from homology"/>
<organism>
    <name type="scientific">Aspergillus niger (strain ATCC MYA-4892 / CBS 513.88 / FGSC A1513)</name>
    <dbReference type="NCBI Taxonomy" id="425011"/>
    <lineage>
        <taxon>Eukaryota</taxon>
        <taxon>Fungi</taxon>
        <taxon>Dikarya</taxon>
        <taxon>Ascomycota</taxon>
        <taxon>Pezizomycotina</taxon>
        <taxon>Eurotiomycetes</taxon>
        <taxon>Eurotiomycetidae</taxon>
        <taxon>Eurotiales</taxon>
        <taxon>Aspergillaceae</taxon>
        <taxon>Aspergillus</taxon>
        <taxon>Aspergillus subgen. Circumdati</taxon>
    </lineage>
</organism>